<dbReference type="EMBL" id="CP001389">
    <property type="protein sequence ID" value="ACP24997.1"/>
    <property type="molecule type" value="Genomic_DNA"/>
</dbReference>
<dbReference type="RefSeq" id="WP_012707774.1">
    <property type="nucleotide sequence ID" value="NC_012587.1"/>
</dbReference>
<dbReference type="RefSeq" id="YP_002825750.1">
    <property type="nucleotide sequence ID" value="NC_012587.1"/>
</dbReference>
<dbReference type="SMR" id="C3MB04"/>
<dbReference type="STRING" id="394.NGR_c12150"/>
<dbReference type="KEGG" id="rhi:NGR_c12150"/>
<dbReference type="PATRIC" id="fig|394.7.peg.4032"/>
<dbReference type="eggNOG" id="COG0203">
    <property type="taxonomic scope" value="Bacteria"/>
</dbReference>
<dbReference type="HOGENOM" id="CLU_074407_2_0_5"/>
<dbReference type="OrthoDB" id="9809073at2"/>
<dbReference type="Proteomes" id="UP000001054">
    <property type="component" value="Chromosome"/>
</dbReference>
<dbReference type="GO" id="GO:0022625">
    <property type="term" value="C:cytosolic large ribosomal subunit"/>
    <property type="evidence" value="ECO:0007669"/>
    <property type="project" value="TreeGrafter"/>
</dbReference>
<dbReference type="GO" id="GO:0003735">
    <property type="term" value="F:structural constituent of ribosome"/>
    <property type="evidence" value="ECO:0007669"/>
    <property type="project" value="InterPro"/>
</dbReference>
<dbReference type="GO" id="GO:0006412">
    <property type="term" value="P:translation"/>
    <property type="evidence" value="ECO:0007669"/>
    <property type="project" value="UniProtKB-UniRule"/>
</dbReference>
<dbReference type="FunFam" id="3.90.1030.10:FF:000001">
    <property type="entry name" value="50S ribosomal protein L17"/>
    <property type="match status" value="1"/>
</dbReference>
<dbReference type="Gene3D" id="3.90.1030.10">
    <property type="entry name" value="Ribosomal protein L17"/>
    <property type="match status" value="1"/>
</dbReference>
<dbReference type="HAMAP" id="MF_01368">
    <property type="entry name" value="Ribosomal_bL17"/>
    <property type="match status" value="1"/>
</dbReference>
<dbReference type="InterPro" id="IPR000456">
    <property type="entry name" value="Ribosomal_bL17"/>
</dbReference>
<dbReference type="InterPro" id="IPR047859">
    <property type="entry name" value="Ribosomal_bL17_CS"/>
</dbReference>
<dbReference type="InterPro" id="IPR036373">
    <property type="entry name" value="Ribosomal_bL17_sf"/>
</dbReference>
<dbReference type="NCBIfam" id="TIGR00059">
    <property type="entry name" value="L17"/>
    <property type="match status" value="1"/>
</dbReference>
<dbReference type="PANTHER" id="PTHR14413:SF16">
    <property type="entry name" value="LARGE RIBOSOMAL SUBUNIT PROTEIN BL17M"/>
    <property type="match status" value="1"/>
</dbReference>
<dbReference type="PANTHER" id="PTHR14413">
    <property type="entry name" value="RIBOSOMAL PROTEIN L17"/>
    <property type="match status" value="1"/>
</dbReference>
<dbReference type="Pfam" id="PF01196">
    <property type="entry name" value="Ribosomal_L17"/>
    <property type="match status" value="1"/>
</dbReference>
<dbReference type="SUPFAM" id="SSF64263">
    <property type="entry name" value="Prokaryotic ribosomal protein L17"/>
    <property type="match status" value="1"/>
</dbReference>
<dbReference type="PROSITE" id="PS01167">
    <property type="entry name" value="RIBOSOMAL_L17"/>
    <property type="match status" value="1"/>
</dbReference>
<accession>C3MB04</accession>
<reference key="1">
    <citation type="journal article" date="2009" name="Appl. Environ. Microbiol.">
        <title>Rhizobium sp. strain NGR234 possesses a remarkable number of secretion systems.</title>
        <authorList>
            <person name="Schmeisser C."/>
            <person name="Liesegang H."/>
            <person name="Krysciak D."/>
            <person name="Bakkou N."/>
            <person name="Le Quere A."/>
            <person name="Wollherr A."/>
            <person name="Heinemeyer I."/>
            <person name="Morgenstern B."/>
            <person name="Pommerening-Roeser A."/>
            <person name="Flores M."/>
            <person name="Palacios R."/>
            <person name="Brenner S."/>
            <person name="Gottschalk G."/>
            <person name="Schmitz R.A."/>
            <person name="Broughton W.J."/>
            <person name="Perret X."/>
            <person name="Strittmatter A.W."/>
            <person name="Streit W.R."/>
        </authorList>
    </citation>
    <scope>NUCLEOTIDE SEQUENCE [LARGE SCALE GENOMIC DNA]</scope>
    <source>
        <strain>NBRC 101917 / NGR234</strain>
    </source>
</reference>
<proteinExistence type="inferred from homology"/>
<keyword id="KW-1185">Reference proteome</keyword>
<keyword id="KW-0687">Ribonucleoprotein</keyword>
<keyword id="KW-0689">Ribosomal protein</keyword>
<comment type="subunit">
    <text evidence="1">Part of the 50S ribosomal subunit. Contacts protein L32.</text>
</comment>
<comment type="similarity">
    <text evidence="1">Belongs to the bacterial ribosomal protein bL17 family.</text>
</comment>
<feature type="chain" id="PRO_1000184038" description="Large ribosomal subunit protein bL17">
    <location>
        <begin position="1"/>
        <end position="141"/>
    </location>
</feature>
<sequence>MRHGKAGRKLNRTASHRKAMFANMAASLIEHEQIVTTLPKAKEIRPIVEKLVTLGKRGDLHARRQAISQIRDVAVVSKLFDAIASRYATRNGGYLRIMKAGFRQGDNAPLAVIEFVDRDVDAKGAKDRARVAAEAEAAEAA</sequence>
<protein>
    <recommendedName>
        <fullName evidence="1">Large ribosomal subunit protein bL17</fullName>
    </recommendedName>
    <alternativeName>
        <fullName evidence="2">50S ribosomal protein L17</fullName>
    </alternativeName>
</protein>
<name>RL17_SINFN</name>
<evidence type="ECO:0000255" key="1">
    <source>
        <dbReference type="HAMAP-Rule" id="MF_01368"/>
    </source>
</evidence>
<evidence type="ECO:0000305" key="2"/>
<gene>
    <name evidence="1" type="primary">rplQ</name>
    <name type="ordered locus">NGR_c12150</name>
</gene>
<organism>
    <name type="scientific">Sinorhizobium fredii (strain NBRC 101917 / NGR234)</name>
    <dbReference type="NCBI Taxonomy" id="394"/>
    <lineage>
        <taxon>Bacteria</taxon>
        <taxon>Pseudomonadati</taxon>
        <taxon>Pseudomonadota</taxon>
        <taxon>Alphaproteobacteria</taxon>
        <taxon>Hyphomicrobiales</taxon>
        <taxon>Rhizobiaceae</taxon>
        <taxon>Sinorhizobium/Ensifer group</taxon>
        <taxon>Sinorhizobium</taxon>
    </lineage>
</organism>